<evidence type="ECO:0000250" key="1"/>
<evidence type="ECO:0000255" key="2"/>
<evidence type="ECO:0000305" key="3"/>
<keyword id="KW-1003">Cell membrane</keyword>
<keyword id="KW-0342">GTP-binding</keyword>
<keyword id="KW-0449">Lipoprotein</keyword>
<keyword id="KW-0472">Membrane</keyword>
<keyword id="KW-0488">Methylation</keyword>
<keyword id="KW-0547">Nucleotide-binding</keyword>
<keyword id="KW-0636">Prenylation</keyword>
<keyword id="KW-1185">Reference proteome</keyword>
<feature type="chain" id="PRO_0000312518" description="Rho-related protein racM">
    <location>
        <begin position="1"/>
        <end position="186"/>
    </location>
</feature>
<feature type="propeptide" id="PRO_0000312519" description="Removed in mature form" evidence="1">
    <location>
        <begin position="187"/>
        <end position="189"/>
    </location>
</feature>
<feature type="short sequence motif" description="Effector region" evidence="2">
    <location>
        <begin position="35"/>
        <end position="43"/>
    </location>
</feature>
<feature type="binding site" evidence="1">
    <location>
        <begin position="12"/>
        <end position="19"/>
    </location>
    <ligand>
        <name>GTP</name>
        <dbReference type="ChEBI" id="CHEBI:37565"/>
    </ligand>
</feature>
<feature type="binding site" evidence="1">
    <location>
        <begin position="60"/>
        <end position="64"/>
    </location>
    <ligand>
        <name>GTP</name>
        <dbReference type="ChEBI" id="CHEBI:37565"/>
    </ligand>
</feature>
<feature type="binding site" evidence="1">
    <location>
        <begin position="118"/>
        <end position="121"/>
    </location>
    <ligand>
        <name>GTP</name>
        <dbReference type="ChEBI" id="CHEBI:37565"/>
    </ligand>
</feature>
<feature type="modified residue" description="Cysteine methyl ester" evidence="1">
    <location>
        <position position="186"/>
    </location>
</feature>
<feature type="lipid moiety-binding region" description="S-geranylgeranyl cysteine" evidence="1">
    <location>
        <position position="186"/>
    </location>
</feature>
<organism>
    <name type="scientific">Dictyostelium discoideum</name>
    <name type="common">Social amoeba</name>
    <dbReference type="NCBI Taxonomy" id="44689"/>
    <lineage>
        <taxon>Eukaryota</taxon>
        <taxon>Amoebozoa</taxon>
        <taxon>Evosea</taxon>
        <taxon>Eumycetozoa</taxon>
        <taxon>Dictyostelia</taxon>
        <taxon>Dictyosteliales</taxon>
        <taxon>Dictyosteliaceae</taxon>
        <taxon>Dictyostelium</taxon>
    </lineage>
</organism>
<dbReference type="EMBL" id="AAFI02000130">
    <property type="protein sequence ID" value="EAL62901.2"/>
    <property type="molecule type" value="Genomic_DNA"/>
</dbReference>
<dbReference type="RefSeq" id="XP_636408.2">
    <property type="nucleotide sequence ID" value="XM_631316.2"/>
</dbReference>
<dbReference type="SMR" id="Q54HZ7"/>
<dbReference type="FunCoup" id="Q54HZ7">
    <property type="interactions" value="19"/>
</dbReference>
<dbReference type="STRING" id="44689.Q54HZ7"/>
<dbReference type="PaxDb" id="44689-DDB0230015"/>
<dbReference type="EnsemblProtists" id="EAL62901">
    <property type="protein sequence ID" value="EAL62901"/>
    <property type="gene ID" value="DDB_G0289103"/>
</dbReference>
<dbReference type="GeneID" id="8626967"/>
<dbReference type="KEGG" id="ddi:DDB_G0289103"/>
<dbReference type="dictyBase" id="DDB_G0289103">
    <property type="gene designation" value="racM"/>
</dbReference>
<dbReference type="VEuPathDB" id="AmoebaDB:DDB_G0289103"/>
<dbReference type="eggNOG" id="KOG0393">
    <property type="taxonomic scope" value="Eukaryota"/>
</dbReference>
<dbReference type="HOGENOM" id="CLU_041217_21_3_1"/>
<dbReference type="InParanoid" id="Q54HZ7"/>
<dbReference type="OMA" id="HAYVHRC"/>
<dbReference type="PhylomeDB" id="Q54HZ7"/>
<dbReference type="Reactome" id="R-DDI-6798695">
    <property type="pathway name" value="Neutrophil degranulation"/>
</dbReference>
<dbReference type="Reactome" id="R-DDI-9013404">
    <property type="pathway name" value="RAC2 GTPase cycle"/>
</dbReference>
<dbReference type="Reactome" id="R-DDI-9013407">
    <property type="pathway name" value="RHOH GTPase cycle"/>
</dbReference>
<dbReference type="Reactome" id="R-DDI-9013408">
    <property type="pathway name" value="RHOG GTPase cycle"/>
</dbReference>
<dbReference type="Reactome" id="R-DDI-9013418">
    <property type="pathway name" value="RHOBTB2 GTPase cycle"/>
</dbReference>
<dbReference type="Reactome" id="R-DDI-9013422">
    <property type="pathway name" value="RHOBTB1 GTPase cycle"/>
</dbReference>
<dbReference type="PRO" id="PR:Q54HZ7"/>
<dbReference type="Proteomes" id="UP000002195">
    <property type="component" value="Chromosome 5"/>
</dbReference>
<dbReference type="GO" id="GO:0042995">
    <property type="term" value="C:cell projection"/>
    <property type="evidence" value="ECO:0000318"/>
    <property type="project" value="GO_Central"/>
</dbReference>
<dbReference type="GO" id="GO:0031410">
    <property type="term" value="C:cytoplasmic vesicle"/>
    <property type="evidence" value="ECO:0000318"/>
    <property type="project" value="GO_Central"/>
</dbReference>
<dbReference type="GO" id="GO:0005856">
    <property type="term" value="C:cytoskeleton"/>
    <property type="evidence" value="ECO:0000318"/>
    <property type="project" value="GO_Central"/>
</dbReference>
<dbReference type="GO" id="GO:0005886">
    <property type="term" value="C:plasma membrane"/>
    <property type="evidence" value="ECO:0000318"/>
    <property type="project" value="GO_Central"/>
</dbReference>
<dbReference type="GO" id="GO:0005525">
    <property type="term" value="F:GTP binding"/>
    <property type="evidence" value="ECO:0000318"/>
    <property type="project" value="GO_Central"/>
</dbReference>
<dbReference type="GO" id="GO:0003924">
    <property type="term" value="F:GTPase activity"/>
    <property type="evidence" value="ECO:0000318"/>
    <property type="project" value="GO_Central"/>
</dbReference>
<dbReference type="GO" id="GO:0019901">
    <property type="term" value="F:protein kinase binding"/>
    <property type="evidence" value="ECO:0000318"/>
    <property type="project" value="GO_Central"/>
</dbReference>
<dbReference type="GO" id="GO:0007015">
    <property type="term" value="P:actin filament organization"/>
    <property type="evidence" value="ECO:0000318"/>
    <property type="project" value="GO_Central"/>
</dbReference>
<dbReference type="GO" id="GO:0030865">
    <property type="term" value="P:cortical cytoskeleton organization"/>
    <property type="evidence" value="ECO:0000318"/>
    <property type="project" value="GO_Central"/>
</dbReference>
<dbReference type="GO" id="GO:0007163">
    <property type="term" value="P:establishment or maintenance of cell polarity"/>
    <property type="evidence" value="ECO:0000318"/>
    <property type="project" value="GO_Central"/>
</dbReference>
<dbReference type="GO" id="GO:0000281">
    <property type="term" value="P:mitotic cytokinesis"/>
    <property type="evidence" value="ECO:0000318"/>
    <property type="project" value="GO_Central"/>
</dbReference>
<dbReference type="GO" id="GO:0032956">
    <property type="term" value="P:regulation of actin cytoskeleton organization"/>
    <property type="evidence" value="ECO:0000318"/>
    <property type="project" value="GO_Central"/>
</dbReference>
<dbReference type="GO" id="GO:0008360">
    <property type="term" value="P:regulation of cell shape"/>
    <property type="evidence" value="ECO:0000318"/>
    <property type="project" value="GO_Central"/>
</dbReference>
<dbReference type="GO" id="GO:0007165">
    <property type="term" value="P:signal transduction"/>
    <property type="evidence" value="ECO:0000318"/>
    <property type="project" value="GO_Central"/>
</dbReference>
<dbReference type="GO" id="GO:0007264">
    <property type="term" value="P:small GTPase-mediated signal transduction"/>
    <property type="evidence" value="ECO:0007669"/>
    <property type="project" value="InterPro"/>
</dbReference>
<dbReference type="CDD" id="cd00157">
    <property type="entry name" value="Rho"/>
    <property type="match status" value="1"/>
</dbReference>
<dbReference type="FunFam" id="3.40.50.300:FF:001799">
    <property type="entry name" value="Rac2 family GTP-binding protein, putative"/>
    <property type="match status" value="1"/>
</dbReference>
<dbReference type="Gene3D" id="3.40.50.300">
    <property type="entry name" value="P-loop containing nucleotide triphosphate hydrolases"/>
    <property type="match status" value="1"/>
</dbReference>
<dbReference type="InterPro" id="IPR027417">
    <property type="entry name" value="P-loop_NTPase"/>
</dbReference>
<dbReference type="InterPro" id="IPR005225">
    <property type="entry name" value="Small_GTP-bd"/>
</dbReference>
<dbReference type="InterPro" id="IPR001806">
    <property type="entry name" value="Small_GTPase"/>
</dbReference>
<dbReference type="InterPro" id="IPR003578">
    <property type="entry name" value="Small_GTPase_Rho"/>
</dbReference>
<dbReference type="NCBIfam" id="TIGR00231">
    <property type="entry name" value="small_GTP"/>
    <property type="match status" value="1"/>
</dbReference>
<dbReference type="PANTHER" id="PTHR24072">
    <property type="entry name" value="RHO FAMILY GTPASE"/>
    <property type="match status" value="1"/>
</dbReference>
<dbReference type="Pfam" id="PF00071">
    <property type="entry name" value="Ras"/>
    <property type="match status" value="1"/>
</dbReference>
<dbReference type="PRINTS" id="PR00449">
    <property type="entry name" value="RASTRNSFRMNG"/>
</dbReference>
<dbReference type="SMART" id="SM00175">
    <property type="entry name" value="RAB"/>
    <property type="match status" value="1"/>
</dbReference>
<dbReference type="SMART" id="SM00173">
    <property type="entry name" value="RAS"/>
    <property type="match status" value="1"/>
</dbReference>
<dbReference type="SMART" id="SM00174">
    <property type="entry name" value="RHO"/>
    <property type="match status" value="1"/>
</dbReference>
<dbReference type="SUPFAM" id="SSF52540">
    <property type="entry name" value="P-loop containing nucleoside triphosphate hydrolases"/>
    <property type="match status" value="1"/>
</dbReference>
<dbReference type="PROSITE" id="PS51420">
    <property type="entry name" value="RHO"/>
    <property type="match status" value="1"/>
</dbReference>
<reference key="1">
    <citation type="journal article" date="2005" name="Nature">
        <title>The genome of the social amoeba Dictyostelium discoideum.</title>
        <authorList>
            <person name="Eichinger L."/>
            <person name="Pachebat J.A."/>
            <person name="Gloeckner G."/>
            <person name="Rajandream M.A."/>
            <person name="Sucgang R."/>
            <person name="Berriman M."/>
            <person name="Song J."/>
            <person name="Olsen R."/>
            <person name="Szafranski K."/>
            <person name="Xu Q."/>
            <person name="Tunggal B."/>
            <person name="Kummerfeld S."/>
            <person name="Madera M."/>
            <person name="Konfortov B.A."/>
            <person name="Rivero F."/>
            <person name="Bankier A.T."/>
            <person name="Lehmann R."/>
            <person name="Hamlin N."/>
            <person name="Davies R."/>
            <person name="Gaudet P."/>
            <person name="Fey P."/>
            <person name="Pilcher K."/>
            <person name="Chen G."/>
            <person name="Saunders D."/>
            <person name="Sodergren E.J."/>
            <person name="Davis P."/>
            <person name="Kerhornou A."/>
            <person name="Nie X."/>
            <person name="Hall N."/>
            <person name="Anjard C."/>
            <person name="Hemphill L."/>
            <person name="Bason N."/>
            <person name="Farbrother P."/>
            <person name="Desany B."/>
            <person name="Just E."/>
            <person name="Morio T."/>
            <person name="Rost R."/>
            <person name="Churcher C.M."/>
            <person name="Cooper J."/>
            <person name="Haydock S."/>
            <person name="van Driessche N."/>
            <person name="Cronin A."/>
            <person name="Goodhead I."/>
            <person name="Muzny D.M."/>
            <person name="Mourier T."/>
            <person name="Pain A."/>
            <person name="Lu M."/>
            <person name="Harper D."/>
            <person name="Lindsay R."/>
            <person name="Hauser H."/>
            <person name="James K.D."/>
            <person name="Quiles M."/>
            <person name="Madan Babu M."/>
            <person name="Saito T."/>
            <person name="Buchrieser C."/>
            <person name="Wardroper A."/>
            <person name="Felder M."/>
            <person name="Thangavelu M."/>
            <person name="Johnson D."/>
            <person name="Knights A."/>
            <person name="Loulseged H."/>
            <person name="Mungall K.L."/>
            <person name="Oliver K."/>
            <person name="Price C."/>
            <person name="Quail M.A."/>
            <person name="Urushihara H."/>
            <person name="Hernandez J."/>
            <person name="Rabbinowitsch E."/>
            <person name="Steffen D."/>
            <person name="Sanders M."/>
            <person name="Ma J."/>
            <person name="Kohara Y."/>
            <person name="Sharp S."/>
            <person name="Simmonds M.N."/>
            <person name="Spiegler S."/>
            <person name="Tivey A."/>
            <person name="Sugano S."/>
            <person name="White B."/>
            <person name="Walker D."/>
            <person name="Woodward J.R."/>
            <person name="Winckler T."/>
            <person name="Tanaka Y."/>
            <person name="Shaulsky G."/>
            <person name="Schleicher M."/>
            <person name="Weinstock G.M."/>
            <person name="Rosenthal A."/>
            <person name="Cox E.C."/>
            <person name="Chisholm R.L."/>
            <person name="Gibbs R.A."/>
            <person name="Loomis W.F."/>
            <person name="Platzer M."/>
            <person name="Kay R.R."/>
            <person name="Williams J.G."/>
            <person name="Dear P.H."/>
            <person name="Noegel A.A."/>
            <person name="Barrell B.G."/>
            <person name="Kuspa A."/>
        </authorList>
    </citation>
    <scope>NUCLEOTIDE SEQUENCE [LARGE SCALE GENOMIC DNA]</scope>
    <source>
        <strain>AX4</strain>
    </source>
</reference>
<comment type="subcellular location">
    <subcellularLocation>
        <location evidence="3">Cell membrane</location>
        <topology evidence="3">Lipid-anchor</topology>
        <orientation evidence="3">Cytoplasmic side</orientation>
    </subcellularLocation>
</comment>
<comment type="similarity">
    <text evidence="3">Belongs to the small GTPase superfamily. Rho family.</text>
</comment>
<protein>
    <recommendedName>
        <fullName>Rho-related protein racM</fullName>
    </recommendedName>
</protein>
<accession>Q54HZ7</accession>
<proteinExistence type="inferred from homology"/>
<gene>
    <name type="primary">racM</name>
    <name type="ORF">DDB_G0289103</name>
</gene>
<name>RACM_DICDI</name>
<sequence>MNIKTIKIVTIGDYGVGKTTLLMTYTASGSFPQEYVPTALDNFIHEATINGKKASLSIWDTAGGEYYHELRPLIYPETDILLLLFAIENRESFLHIKTNWITEINQYIPGIPIILVGTKIDLRDSDLIKDKSNFVKYKEGLALSKEIGASHFCECSSRMNLGLEELFKKVIKLTNNNNNNNNNNKCIIL</sequence>